<reference key="1">
    <citation type="journal article" date="1998" name="Science">
        <title>Genome sequence of an obligate intracellular pathogen of humans: Chlamydia trachomatis.</title>
        <authorList>
            <person name="Stephens R.S."/>
            <person name="Kalman S."/>
            <person name="Lammel C.J."/>
            <person name="Fan J."/>
            <person name="Marathe R."/>
            <person name="Aravind L."/>
            <person name="Mitchell W.P."/>
            <person name="Olinger L."/>
            <person name="Tatusov R.L."/>
            <person name="Zhao Q."/>
            <person name="Koonin E.V."/>
            <person name="Davis R.W."/>
        </authorList>
    </citation>
    <scope>NUCLEOTIDE SEQUENCE [LARGE SCALE GENOMIC DNA]</scope>
    <source>
        <strain>ATCC VR-885 / DSM 19411 / UW-3/Cx</strain>
    </source>
</reference>
<keyword id="KW-1003">Cell membrane</keyword>
<keyword id="KW-0472">Membrane</keyword>
<keyword id="KW-1185">Reference proteome</keyword>
<keyword id="KW-0812">Transmembrane</keyword>
<keyword id="KW-1133">Transmembrane helix</keyword>
<gene>
    <name type="ordered locus">CT_852</name>
</gene>
<proteinExistence type="inferred from homology"/>
<feature type="chain" id="PRO_0000156915" description="UPF0056 membrane protein CT_852">
    <location>
        <begin position="1"/>
        <end position="204"/>
    </location>
</feature>
<feature type="transmembrane region" description="Helical" evidence="1">
    <location>
        <begin position="9"/>
        <end position="29"/>
    </location>
</feature>
<feature type="transmembrane region" description="Helical" evidence="1">
    <location>
        <begin position="39"/>
        <end position="59"/>
    </location>
</feature>
<feature type="transmembrane region" description="Helical" evidence="1">
    <location>
        <begin position="66"/>
        <end position="86"/>
    </location>
</feature>
<feature type="transmembrane region" description="Helical" evidence="1">
    <location>
        <begin position="107"/>
        <end position="127"/>
    </location>
</feature>
<feature type="transmembrane region" description="Helical" evidence="1">
    <location>
        <begin position="138"/>
        <end position="158"/>
    </location>
</feature>
<feature type="transmembrane region" description="Helical" evidence="1">
    <location>
        <begin position="176"/>
        <end position="196"/>
    </location>
</feature>
<accession>O84860</accession>
<dbReference type="EMBL" id="AE001273">
    <property type="protein sequence ID" value="AAC68449.1"/>
    <property type="molecule type" value="Genomic_DNA"/>
</dbReference>
<dbReference type="PIR" id="E71462">
    <property type="entry name" value="E71462"/>
</dbReference>
<dbReference type="RefSeq" id="NP_220374.1">
    <property type="nucleotide sequence ID" value="NC_000117.1"/>
</dbReference>
<dbReference type="RefSeq" id="WP_010725369.1">
    <property type="nucleotide sequence ID" value="NC_000117.1"/>
</dbReference>
<dbReference type="FunCoup" id="O84860">
    <property type="interactions" value="29"/>
</dbReference>
<dbReference type="STRING" id="272561.CT_852"/>
<dbReference type="EnsemblBacteria" id="AAC68449">
    <property type="protein sequence ID" value="AAC68449"/>
    <property type="gene ID" value="CT_852"/>
</dbReference>
<dbReference type="GeneID" id="884651"/>
<dbReference type="KEGG" id="ctr:CT_852"/>
<dbReference type="PATRIC" id="fig|272561.5.peg.941"/>
<dbReference type="HOGENOM" id="CLU_079909_1_1_0"/>
<dbReference type="InParanoid" id="O84860"/>
<dbReference type="OrthoDB" id="19140at2"/>
<dbReference type="Proteomes" id="UP000000431">
    <property type="component" value="Chromosome"/>
</dbReference>
<dbReference type="GO" id="GO:0005886">
    <property type="term" value="C:plasma membrane"/>
    <property type="evidence" value="ECO:0007669"/>
    <property type="project" value="UniProtKB-SubCell"/>
</dbReference>
<dbReference type="InterPro" id="IPR002771">
    <property type="entry name" value="Multi_antbiot-R_MarC"/>
</dbReference>
<dbReference type="PANTHER" id="PTHR33508">
    <property type="entry name" value="UPF0056 MEMBRANE PROTEIN YHCE"/>
    <property type="match status" value="1"/>
</dbReference>
<dbReference type="PANTHER" id="PTHR33508:SF1">
    <property type="entry name" value="UPF0056 MEMBRANE PROTEIN YHCE"/>
    <property type="match status" value="1"/>
</dbReference>
<dbReference type="Pfam" id="PF01914">
    <property type="entry name" value="MarC"/>
    <property type="match status" value="1"/>
</dbReference>
<organism>
    <name type="scientific">Chlamydia trachomatis serovar D (strain ATCC VR-885 / DSM 19411 / UW-3/Cx)</name>
    <dbReference type="NCBI Taxonomy" id="272561"/>
    <lineage>
        <taxon>Bacteria</taxon>
        <taxon>Pseudomonadati</taxon>
        <taxon>Chlamydiota</taxon>
        <taxon>Chlamydiia</taxon>
        <taxon>Chlamydiales</taxon>
        <taxon>Chlamydiaceae</taxon>
        <taxon>Chlamydia/Chlamydophila group</taxon>
        <taxon>Chlamydia</taxon>
    </lineage>
</organism>
<sequence length="204" mass="22643">MLHSLFRLTLLFYALFNALGSLPVFIALLKNFSFKKQQHIILRESIFALLLLLLFVTFGRGFFRLLGIILPAFQFTGSLLLGSIAIDMMKALPPQTETLERDKDEPIFFPLAFPVITGPAMITSTLGHMEEGIFPKKIVLGAIVLAWLFSLITLLLSSSINRLFGQMGLLALERLFGISLALMAGNLMLKALSTAFNIGYYVTP</sequence>
<protein>
    <recommendedName>
        <fullName>UPF0056 membrane protein CT_852</fullName>
    </recommendedName>
</protein>
<comment type="subcellular location">
    <subcellularLocation>
        <location evidence="2">Cell membrane</location>
        <topology evidence="2">Multi-pass membrane protein</topology>
    </subcellularLocation>
</comment>
<comment type="similarity">
    <text evidence="2">Belongs to the UPF0056 (MarC) family.</text>
</comment>
<name>Y852_CHLTR</name>
<evidence type="ECO:0000255" key="1"/>
<evidence type="ECO:0000305" key="2"/>